<gene>
    <name evidence="1" type="primary">tsaD</name>
    <name type="synonym">gcp</name>
    <name type="ordered locus">Sez_0288</name>
</gene>
<name>TSAD_STREM</name>
<evidence type="ECO:0000255" key="1">
    <source>
        <dbReference type="HAMAP-Rule" id="MF_01445"/>
    </source>
</evidence>
<organism>
    <name type="scientific">Streptococcus equi subsp. zooepidemicus (strain MGCS10565)</name>
    <dbReference type="NCBI Taxonomy" id="552526"/>
    <lineage>
        <taxon>Bacteria</taxon>
        <taxon>Bacillati</taxon>
        <taxon>Bacillota</taxon>
        <taxon>Bacilli</taxon>
        <taxon>Lactobacillales</taxon>
        <taxon>Streptococcaceae</taxon>
        <taxon>Streptococcus</taxon>
    </lineage>
</organism>
<accession>B4U0X7</accession>
<sequence length="338" mass="36478">MTDRYILAVESSCDETSVAVLKNDNVLLTNIIASQVESHKRFGGVVPEVASRHHVEVITTCFDDALKEAQLEASDLTAVAVTYGPGLVGALLVGLAAAKAFAWANDLPLIPVNHMAGHLMAAREQGELEYPLMALLVSGGHTELVYVTEPGEYHIVGETRDDAVGEAYDKVGRVMGLPYPAGREIDQLAHQGTDTYHFPRAMMKEDHLEFSFSGLQSAFINLHHNAQQKGEELVLEDLCASFQAAVLDILLAKTKKALKQYPSKMLVVAGGVAANQGLRERLAKEITDLAVVIPPLRLCGDNAGMIALAAAVEYDKGHVADLDLNAKPSLAFESFHQQ</sequence>
<dbReference type="EC" id="2.3.1.234" evidence="1"/>
<dbReference type="EMBL" id="CP001129">
    <property type="protein sequence ID" value="ACG61664.1"/>
    <property type="molecule type" value="Genomic_DNA"/>
</dbReference>
<dbReference type="RefSeq" id="WP_012514945.1">
    <property type="nucleotide sequence ID" value="NC_011134.1"/>
</dbReference>
<dbReference type="SMR" id="B4U0X7"/>
<dbReference type="KEGG" id="sez:Sez_0288"/>
<dbReference type="HOGENOM" id="CLU_023208_0_2_9"/>
<dbReference type="Proteomes" id="UP000001873">
    <property type="component" value="Chromosome"/>
</dbReference>
<dbReference type="GO" id="GO:0005737">
    <property type="term" value="C:cytoplasm"/>
    <property type="evidence" value="ECO:0007669"/>
    <property type="project" value="UniProtKB-SubCell"/>
</dbReference>
<dbReference type="GO" id="GO:0005506">
    <property type="term" value="F:iron ion binding"/>
    <property type="evidence" value="ECO:0007669"/>
    <property type="project" value="UniProtKB-UniRule"/>
</dbReference>
<dbReference type="GO" id="GO:0061711">
    <property type="term" value="F:N(6)-L-threonylcarbamoyladenine synthase activity"/>
    <property type="evidence" value="ECO:0007669"/>
    <property type="project" value="UniProtKB-EC"/>
</dbReference>
<dbReference type="GO" id="GO:0002949">
    <property type="term" value="P:tRNA threonylcarbamoyladenosine modification"/>
    <property type="evidence" value="ECO:0007669"/>
    <property type="project" value="UniProtKB-UniRule"/>
</dbReference>
<dbReference type="CDD" id="cd24133">
    <property type="entry name" value="ASKHA_NBD_TsaD_bac"/>
    <property type="match status" value="1"/>
</dbReference>
<dbReference type="FunFam" id="3.30.420.40:FF:000012">
    <property type="entry name" value="tRNA N6-adenosine threonylcarbamoyltransferase"/>
    <property type="match status" value="1"/>
</dbReference>
<dbReference type="FunFam" id="3.30.420.40:FF:000040">
    <property type="entry name" value="tRNA N6-adenosine threonylcarbamoyltransferase"/>
    <property type="match status" value="1"/>
</dbReference>
<dbReference type="Gene3D" id="3.30.420.40">
    <property type="match status" value="2"/>
</dbReference>
<dbReference type="HAMAP" id="MF_01445">
    <property type="entry name" value="TsaD"/>
    <property type="match status" value="1"/>
</dbReference>
<dbReference type="InterPro" id="IPR043129">
    <property type="entry name" value="ATPase_NBD"/>
</dbReference>
<dbReference type="InterPro" id="IPR000905">
    <property type="entry name" value="Gcp-like_dom"/>
</dbReference>
<dbReference type="InterPro" id="IPR017861">
    <property type="entry name" value="KAE1/TsaD"/>
</dbReference>
<dbReference type="InterPro" id="IPR022450">
    <property type="entry name" value="TsaD"/>
</dbReference>
<dbReference type="NCBIfam" id="TIGR00329">
    <property type="entry name" value="gcp_kae1"/>
    <property type="match status" value="1"/>
</dbReference>
<dbReference type="NCBIfam" id="TIGR03723">
    <property type="entry name" value="T6A_TsaD_YgjD"/>
    <property type="match status" value="1"/>
</dbReference>
<dbReference type="PANTHER" id="PTHR11735">
    <property type="entry name" value="TRNA N6-ADENOSINE THREONYLCARBAMOYLTRANSFERASE"/>
    <property type="match status" value="1"/>
</dbReference>
<dbReference type="PANTHER" id="PTHR11735:SF6">
    <property type="entry name" value="TRNA N6-ADENOSINE THREONYLCARBAMOYLTRANSFERASE, MITOCHONDRIAL"/>
    <property type="match status" value="1"/>
</dbReference>
<dbReference type="Pfam" id="PF00814">
    <property type="entry name" value="TsaD"/>
    <property type="match status" value="1"/>
</dbReference>
<dbReference type="PRINTS" id="PR00789">
    <property type="entry name" value="OSIALOPTASE"/>
</dbReference>
<dbReference type="SUPFAM" id="SSF53067">
    <property type="entry name" value="Actin-like ATPase domain"/>
    <property type="match status" value="1"/>
</dbReference>
<feature type="chain" id="PRO_1000146025" description="tRNA N6-adenosine threonylcarbamoyltransferase">
    <location>
        <begin position="1"/>
        <end position="338"/>
    </location>
</feature>
<feature type="binding site" evidence="1">
    <location>
        <position position="114"/>
    </location>
    <ligand>
        <name>Fe cation</name>
        <dbReference type="ChEBI" id="CHEBI:24875"/>
    </ligand>
</feature>
<feature type="binding site" evidence="1">
    <location>
        <position position="118"/>
    </location>
    <ligand>
        <name>Fe cation</name>
        <dbReference type="ChEBI" id="CHEBI:24875"/>
    </ligand>
</feature>
<feature type="binding site" evidence="1">
    <location>
        <begin position="136"/>
        <end position="140"/>
    </location>
    <ligand>
        <name>substrate</name>
    </ligand>
</feature>
<feature type="binding site" evidence="1">
    <location>
        <position position="169"/>
    </location>
    <ligand>
        <name>substrate</name>
    </ligand>
</feature>
<feature type="binding site" evidence="1">
    <location>
        <position position="182"/>
    </location>
    <ligand>
        <name>substrate</name>
    </ligand>
</feature>
<feature type="binding site" evidence="1">
    <location>
        <position position="186"/>
    </location>
    <ligand>
        <name>substrate</name>
    </ligand>
</feature>
<feature type="binding site" evidence="1">
    <location>
        <position position="275"/>
    </location>
    <ligand>
        <name>substrate</name>
    </ligand>
</feature>
<feature type="binding site" evidence="1">
    <location>
        <position position="301"/>
    </location>
    <ligand>
        <name>Fe cation</name>
        <dbReference type="ChEBI" id="CHEBI:24875"/>
    </ligand>
</feature>
<comment type="function">
    <text evidence="1">Required for the formation of a threonylcarbamoyl group on adenosine at position 37 (t(6)A37) in tRNAs that read codons beginning with adenine. Is involved in the transfer of the threonylcarbamoyl moiety of threonylcarbamoyl-AMP (TC-AMP) to the N6 group of A37, together with TsaE and TsaB. TsaD likely plays a direct catalytic role in this reaction.</text>
</comment>
<comment type="catalytic activity">
    <reaction evidence="1">
        <text>L-threonylcarbamoyladenylate + adenosine(37) in tRNA = N(6)-L-threonylcarbamoyladenosine(37) in tRNA + AMP + H(+)</text>
        <dbReference type="Rhea" id="RHEA:37059"/>
        <dbReference type="Rhea" id="RHEA-COMP:10162"/>
        <dbReference type="Rhea" id="RHEA-COMP:10163"/>
        <dbReference type="ChEBI" id="CHEBI:15378"/>
        <dbReference type="ChEBI" id="CHEBI:73682"/>
        <dbReference type="ChEBI" id="CHEBI:74411"/>
        <dbReference type="ChEBI" id="CHEBI:74418"/>
        <dbReference type="ChEBI" id="CHEBI:456215"/>
        <dbReference type="EC" id="2.3.1.234"/>
    </reaction>
</comment>
<comment type="cofactor">
    <cofactor evidence="1">
        <name>Fe(2+)</name>
        <dbReference type="ChEBI" id="CHEBI:29033"/>
    </cofactor>
    <text evidence="1">Binds 1 Fe(2+) ion per subunit.</text>
</comment>
<comment type="subcellular location">
    <subcellularLocation>
        <location evidence="1">Cytoplasm</location>
    </subcellularLocation>
</comment>
<comment type="similarity">
    <text evidence="1">Belongs to the KAE1 / TsaD family.</text>
</comment>
<protein>
    <recommendedName>
        <fullName evidence="1">tRNA N6-adenosine threonylcarbamoyltransferase</fullName>
        <ecNumber evidence="1">2.3.1.234</ecNumber>
    </recommendedName>
    <alternativeName>
        <fullName evidence="1">N6-L-threonylcarbamoyladenine synthase</fullName>
        <shortName evidence="1">t(6)A synthase</shortName>
    </alternativeName>
    <alternativeName>
        <fullName evidence="1">t(6)A37 threonylcarbamoyladenosine biosynthesis protein TsaD</fullName>
    </alternativeName>
    <alternativeName>
        <fullName evidence="1">tRNA threonylcarbamoyladenosine biosynthesis protein TsaD</fullName>
    </alternativeName>
</protein>
<keyword id="KW-0012">Acyltransferase</keyword>
<keyword id="KW-0963">Cytoplasm</keyword>
<keyword id="KW-0408">Iron</keyword>
<keyword id="KW-0479">Metal-binding</keyword>
<keyword id="KW-0808">Transferase</keyword>
<keyword id="KW-0819">tRNA processing</keyword>
<proteinExistence type="inferred from homology"/>
<reference key="1">
    <citation type="journal article" date="2008" name="PLoS ONE">
        <title>Genome sequence of a lancefield group C Streptococcus zooepidemicus strain causing epidemic nephritis: new information about an old disease.</title>
        <authorList>
            <person name="Beres S.B."/>
            <person name="Sesso R."/>
            <person name="Pinto S.W.L."/>
            <person name="Hoe N.P."/>
            <person name="Porcella S.F."/>
            <person name="Deleo F.R."/>
            <person name="Musser J.M."/>
        </authorList>
    </citation>
    <scope>NUCLEOTIDE SEQUENCE [LARGE SCALE GENOMIC DNA]</scope>
    <source>
        <strain>MGCS10565</strain>
    </source>
</reference>